<name>METJ_KLEP7</name>
<evidence type="ECO:0000255" key="1">
    <source>
        <dbReference type="HAMAP-Rule" id="MF_00744"/>
    </source>
</evidence>
<reference key="1">
    <citation type="submission" date="2006-09" db="EMBL/GenBank/DDBJ databases">
        <authorList>
            <consortium name="The Klebsiella pneumonia Genome Sequencing Project"/>
            <person name="McClelland M."/>
            <person name="Sanderson E.K."/>
            <person name="Spieth J."/>
            <person name="Clifton W.S."/>
            <person name="Latreille P."/>
            <person name="Sabo A."/>
            <person name="Pepin K."/>
            <person name="Bhonagiri V."/>
            <person name="Porwollik S."/>
            <person name="Ali J."/>
            <person name="Wilson R.K."/>
        </authorList>
    </citation>
    <scope>NUCLEOTIDE SEQUENCE [LARGE SCALE GENOMIC DNA]</scope>
    <source>
        <strain>ATCC 700721 / MGH 78578</strain>
    </source>
</reference>
<accession>A6TGC7</accession>
<protein>
    <recommendedName>
        <fullName evidence="1">Met repressor</fullName>
    </recommendedName>
    <alternativeName>
        <fullName evidence="1">Met regulon regulatory protein MetJ</fullName>
    </alternativeName>
</protein>
<sequence length="105" mass="12109">MAEWSGEYISPYAEHGKKSEQVKKITVSIPLKVLKILTDERTRRQVNNLRHATNSELLCEAFLHAFTGQPLPNDEDLRKERSDEIPEAAKAIMRELGIDPDTWEY</sequence>
<proteinExistence type="inferred from homology"/>
<comment type="function">
    <text evidence="1">This regulatory protein, when combined with SAM (S-adenosylmethionine) represses the expression of the methionine regulon and of enzymes involved in SAM synthesis.</text>
</comment>
<comment type="subunit">
    <text evidence="1">Homodimer.</text>
</comment>
<comment type="subcellular location">
    <subcellularLocation>
        <location evidence="1">Cytoplasm</location>
    </subcellularLocation>
</comment>
<comment type="domain">
    <text>Does not bind DNA by a helix-turn-helix motif.</text>
</comment>
<comment type="similarity">
    <text evidence="1">Belongs to the MetJ family.</text>
</comment>
<feature type="chain" id="PRO_1000046493" description="Met repressor">
    <location>
        <begin position="1"/>
        <end position="105"/>
    </location>
</feature>
<gene>
    <name evidence="1" type="primary">metJ</name>
    <name type="ordered locus">KPN78578_41870</name>
    <name type="ORF">KPN_04232</name>
</gene>
<organism>
    <name type="scientific">Klebsiella pneumoniae subsp. pneumoniae (strain ATCC 700721 / MGH 78578)</name>
    <dbReference type="NCBI Taxonomy" id="272620"/>
    <lineage>
        <taxon>Bacteria</taxon>
        <taxon>Pseudomonadati</taxon>
        <taxon>Pseudomonadota</taxon>
        <taxon>Gammaproteobacteria</taxon>
        <taxon>Enterobacterales</taxon>
        <taxon>Enterobacteriaceae</taxon>
        <taxon>Klebsiella/Raoultella group</taxon>
        <taxon>Klebsiella</taxon>
        <taxon>Klebsiella pneumoniae complex</taxon>
    </lineage>
</organism>
<dbReference type="EMBL" id="CP000647">
    <property type="protein sequence ID" value="ABR79611.1"/>
    <property type="molecule type" value="Genomic_DNA"/>
</dbReference>
<dbReference type="RefSeq" id="WP_002882924.1">
    <property type="nucleotide sequence ID" value="NC_009648.1"/>
</dbReference>
<dbReference type="SMR" id="A6TGC7"/>
<dbReference type="STRING" id="272620.KPN_04232"/>
<dbReference type="jPOST" id="A6TGC7"/>
<dbReference type="PaxDb" id="272620-KPN_04232"/>
<dbReference type="EnsemblBacteria" id="ABR79611">
    <property type="protein sequence ID" value="ABR79611"/>
    <property type="gene ID" value="KPN_04232"/>
</dbReference>
<dbReference type="GeneID" id="93251585"/>
<dbReference type="KEGG" id="kpn:KPN_04232"/>
<dbReference type="HOGENOM" id="CLU_142318_0_0_6"/>
<dbReference type="Proteomes" id="UP000000265">
    <property type="component" value="Chromosome"/>
</dbReference>
<dbReference type="GO" id="GO:0005737">
    <property type="term" value="C:cytoplasm"/>
    <property type="evidence" value="ECO:0007669"/>
    <property type="project" value="UniProtKB-SubCell"/>
</dbReference>
<dbReference type="GO" id="GO:0003677">
    <property type="term" value="F:DNA binding"/>
    <property type="evidence" value="ECO:0007669"/>
    <property type="project" value="UniProtKB-KW"/>
</dbReference>
<dbReference type="GO" id="GO:0003700">
    <property type="term" value="F:DNA-binding transcription factor activity"/>
    <property type="evidence" value="ECO:0007669"/>
    <property type="project" value="InterPro"/>
</dbReference>
<dbReference type="GO" id="GO:0009086">
    <property type="term" value="P:methionine biosynthetic process"/>
    <property type="evidence" value="ECO:0007669"/>
    <property type="project" value="UniProtKB-UniRule"/>
</dbReference>
<dbReference type="GO" id="GO:0045892">
    <property type="term" value="P:negative regulation of DNA-templated transcription"/>
    <property type="evidence" value="ECO:0007669"/>
    <property type="project" value="UniProtKB-UniRule"/>
</dbReference>
<dbReference type="CDD" id="cd00490">
    <property type="entry name" value="Met_repressor_MetJ"/>
    <property type="match status" value="1"/>
</dbReference>
<dbReference type="FunFam" id="1.10.140.10:FF:000001">
    <property type="entry name" value="Met repressor"/>
    <property type="match status" value="1"/>
</dbReference>
<dbReference type="Gene3D" id="1.10.140.10">
    <property type="entry name" value="MET Apo-Repressor, subunit A"/>
    <property type="match status" value="1"/>
</dbReference>
<dbReference type="HAMAP" id="MF_00744">
    <property type="entry name" value="MetJ"/>
    <property type="match status" value="1"/>
</dbReference>
<dbReference type="InterPro" id="IPR002084">
    <property type="entry name" value="Met_repressor_MetJ"/>
</dbReference>
<dbReference type="InterPro" id="IPR023453">
    <property type="entry name" value="Met_repressor_MetJ_dom_sf"/>
</dbReference>
<dbReference type="InterPro" id="IPR010985">
    <property type="entry name" value="Ribbon_hlx_hlx"/>
</dbReference>
<dbReference type="NCBIfam" id="NF003622">
    <property type="entry name" value="PRK05264.1"/>
    <property type="match status" value="1"/>
</dbReference>
<dbReference type="Pfam" id="PF01340">
    <property type="entry name" value="MetJ"/>
    <property type="match status" value="1"/>
</dbReference>
<dbReference type="SUPFAM" id="SSF47598">
    <property type="entry name" value="Ribbon-helix-helix"/>
    <property type="match status" value="1"/>
</dbReference>
<keyword id="KW-0028">Amino-acid biosynthesis</keyword>
<keyword id="KW-0963">Cytoplasm</keyword>
<keyword id="KW-0238">DNA-binding</keyword>
<keyword id="KW-0486">Methionine biosynthesis</keyword>
<keyword id="KW-0678">Repressor</keyword>
<keyword id="KW-0804">Transcription</keyword>
<keyword id="KW-0805">Transcription regulation</keyword>